<gene>
    <name type="primary">ints3</name>
    <name type="ORF">DDB_G0268706</name>
</gene>
<keyword id="KW-0963">Cytoplasm</keyword>
<keyword id="KW-0539">Nucleus</keyword>
<keyword id="KW-1185">Reference proteome</keyword>
<proteinExistence type="inferred from homology"/>
<accession>Q55EZ4</accession>
<feature type="chain" id="PRO_0000344375" description="Integrator complex subunit 3 homolog">
    <location>
        <begin position="1"/>
        <end position="1520"/>
    </location>
</feature>
<feature type="region of interest" description="Disordered" evidence="2">
    <location>
        <begin position="1"/>
        <end position="23"/>
    </location>
</feature>
<feature type="region of interest" description="Disordered" evidence="2">
    <location>
        <begin position="523"/>
        <end position="671"/>
    </location>
</feature>
<feature type="region of interest" description="Disordered" evidence="2">
    <location>
        <begin position="689"/>
        <end position="801"/>
    </location>
</feature>
<feature type="region of interest" description="Disordered" evidence="2">
    <location>
        <begin position="813"/>
        <end position="922"/>
    </location>
</feature>
<feature type="region of interest" description="Disordered" evidence="2">
    <location>
        <begin position="1116"/>
        <end position="1177"/>
    </location>
</feature>
<feature type="region of interest" description="Disordered" evidence="2">
    <location>
        <begin position="1489"/>
        <end position="1520"/>
    </location>
</feature>
<feature type="compositionally biased region" description="Low complexity" evidence="2">
    <location>
        <begin position="527"/>
        <end position="549"/>
    </location>
</feature>
<feature type="compositionally biased region" description="Low complexity" evidence="2">
    <location>
        <begin position="557"/>
        <end position="595"/>
    </location>
</feature>
<feature type="compositionally biased region" description="Pro residues" evidence="2">
    <location>
        <begin position="596"/>
        <end position="612"/>
    </location>
</feature>
<feature type="compositionally biased region" description="Low complexity" evidence="2">
    <location>
        <begin position="613"/>
        <end position="625"/>
    </location>
</feature>
<feature type="compositionally biased region" description="Polar residues" evidence="2">
    <location>
        <begin position="626"/>
        <end position="639"/>
    </location>
</feature>
<feature type="compositionally biased region" description="Low complexity" evidence="2">
    <location>
        <begin position="642"/>
        <end position="669"/>
    </location>
</feature>
<feature type="compositionally biased region" description="Low complexity" evidence="2">
    <location>
        <begin position="694"/>
        <end position="717"/>
    </location>
</feature>
<feature type="compositionally biased region" description="Low complexity" evidence="2">
    <location>
        <begin position="725"/>
        <end position="735"/>
    </location>
</feature>
<feature type="compositionally biased region" description="Polar residues" evidence="2">
    <location>
        <begin position="736"/>
        <end position="752"/>
    </location>
</feature>
<feature type="compositionally biased region" description="Low complexity" evidence="2">
    <location>
        <begin position="768"/>
        <end position="789"/>
    </location>
</feature>
<feature type="compositionally biased region" description="Polar residues" evidence="2">
    <location>
        <begin position="819"/>
        <end position="828"/>
    </location>
</feature>
<feature type="compositionally biased region" description="Low complexity" evidence="2">
    <location>
        <begin position="837"/>
        <end position="882"/>
    </location>
</feature>
<feature type="compositionally biased region" description="Pro residues" evidence="2">
    <location>
        <begin position="898"/>
        <end position="918"/>
    </location>
</feature>
<feature type="compositionally biased region" description="Low complexity" evidence="2">
    <location>
        <begin position="1116"/>
        <end position="1130"/>
    </location>
</feature>
<feature type="compositionally biased region" description="Low complexity" evidence="2">
    <location>
        <begin position="1137"/>
        <end position="1177"/>
    </location>
</feature>
<feature type="compositionally biased region" description="Polar residues" evidence="2">
    <location>
        <begin position="1489"/>
        <end position="1504"/>
    </location>
</feature>
<comment type="function">
    <text evidence="1">Component of the integrator complex, a multiprotein complex that terminates RNA polymerase II (Pol II) transcription in the promoter-proximal region of genes. The integrator complex provides a quality checkpoint during transcription elongation by driving premature transcription termination of transcripts that are unfavorably configured for transcriptional elongation: the complex terminates transcription by (1) catalyzing dephosphorylation of the C-terminal domain (CTD) of Pol II subunit polr2a, (2) degrading the exiting nascent RNA transcript via endonuclease activity and (3) promoting the release of Pol II from bound DNA. The integrator complex is also involved in terminating the synthesis of non-coding Pol II transcripts, such as enhancer RNAs (eRNAs), small nuclear RNAs (snRNAs), telomerase RNAs and long non-coding RNAs (lncRNAs).</text>
</comment>
<comment type="function">
    <text evidence="1">Component of the SOSS complex, a multiprotein complex that functions downstream of the MRN complex to promote DNA repair and G2/M checkpoint. The SOSS complex associates with single-stranded DNA at DNA lesions and influences diverse endpoints in the cellular DNA damage response including cell-cycle checkpoint activation, recombinational repair and maintenance of genomic stability. The SOSS complex is required for efficient homologous recombination-dependent repair of double-strand breaks (DSBs) and ATM-dependent signaling pathways. In the SOSS complex, it is required for the assembly of the complex and for stabilization of the complex at DNA damage sites.</text>
</comment>
<comment type="subunit">
    <text evidence="1">Component of the Integrator complex. The core complex associates with protein phosphatase 2A subunits, to form the Integrator-PP2A (INTAC) complex. Component of the SOSS complex.</text>
</comment>
<comment type="subcellular location">
    <subcellularLocation>
        <location evidence="1">Nucleus</location>
    </subcellularLocation>
    <subcellularLocation>
        <location evidence="1">Cytoplasm</location>
    </subcellularLocation>
</comment>
<comment type="similarity">
    <text evidence="3">Belongs to the Integrator subunit 3 family.</text>
</comment>
<name>INT3_DICDI</name>
<evidence type="ECO:0000250" key="1">
    <source>
        <dbReference type="UniProtKB" id="Q68E01"/>
    </source>
</evidence>
<evidence type="ECO:0000256" key="2">
    <source>
        <dbReference type="SAM" id="MobiDB-lite"/>
    </source>
</evidence>
<evidence type="ECO:0000305" key="3"/>
<organism>
    <name type="scientific">Dictyostelium discoideum</name>
    <name type="common">Social amoeba</name>
    <dbReference type="NCBI Taxonomy" id="44689"/>
    <lineage>
        <taxon>Eukaryota</taxon>
        <taxon>Amoebozoa</taxon>
        <taxon>Evosea</taxon>
        <taxon>Eumycetozoa</taxon>
        <taxon>Dictyostelia</taxon>
        <taxon>Dictyosteliales</taxon>
        <taxon>Dictyosteliaceae</taxon>
        <taxon>Dictyostelium</taxon>
    </lineage>
</organism>
<reference key="1">
    <citation type="journal article" date="2005" name="Nature">
        <title>The genome of the social amoeba Dictyostelium discoideum.</title>
        <authorList>
            <person name="Eichinger L."/>
            <person name="Pachebat J.A."/>
            <person name="Gloeckner G."/>
            <person name="Rajandream M.A."/>
            <person name="Sucgang R."/>
            <person name="Berriman M."/>
            <person name="Song J."/>
            <person name="Olsen R."/>
            <person name="Szafranski K."/>
            <person name="Xu Q."/>
            <person name="Tunggal B."/>
            <person name="Kummerfeld S."/>
            <person name="Madera M."/>
            <person name="Konfortov B.A."/>
            <person name="Rivero F."/>
            <person name="Bankier A.T."/>
            <person name="Lehmann R."/>
            <person name="Hamlin N."/>
            <person name="Davies R."/>
            <person name="Gaudet P."/>
            <person name="Fey P."/>
            <person name="Pilcher K."/>
            <person name="Chen G."/>
            <person name="Saunders D."/>
            <person name="Sodergren E.J."/>
            <person name="Davis P."/>
            <person name="Kerhornou A."/>
            <person name="Nie X."/>
            <person name="Hall N."/>
            <person name="Anjard C."/>
            <person name="Hemphill L."/>
            <person name="Bason N."/>
            <person name="Farbrother P."/>
            <person name="Desany B."/>
            <person name="Just E."/>
            <person name="Morio T."/>
            <person name="Rost R."/>
            <person name="Churcher C.M."/>
            <person name="Cooper J."/>
            <person name="Haydock S."/>
            <person name="van Driessche N."/>
            <person name="Cronin A."/>
            <person name="Goodhead I."/>
            <person name="Muzny D.M."/>
            <person name="Mourier T."/>
            <person name="Pain A."/>
            <person name="Lu M."/>
            <person name="Harper D."/>
            <person name="Lindsay R."/>
            <person name="Hauser H."/>
            <person name="James K.D."/>
            <person name="Quiles M."/>
            <person name="Madan Babu M."/>
            <person name="Saito T."/>
            <person name="Buchrieser C."/>
            <person name="Wardroper A."/>
            <person name="Felder M."/>
            <person name="Thangavelu M."/>
            <person name="Johnson D."/>
            <person name="Knights A."/>
            <person name="Loulseged H."/>
            <person name="Mungall K.L."/>
            <person name="Oliver K."/>
            <person name="Price C."/>
            <person name="Quail M.A."/>
            <person name="Urushihara H."/>
            <person name="Hernandez J."/>
            <person name="Rabbinowitsch E."/>
            <person name="Steffen D."/>
            <person name="Sanders M."/>
            <person name="Ma J."/>
            <person name="Kohara Y."/>
            <person name="Sharp S."/>
            <person name="Simmonds M.N."/>
            <person name="Spiegler S."/>
            <person name="Tivey A."/>
            <person name="Sugano S."/>
            <person name="White B."/>
            <person name="Walker D."/>
            <person name="Woodward J.R."/>
            <person name="Winckler T."/>
            <person name="Tanaka Y."/>
            <person name="Shaulsky G."/>
            <person name="Schleicher M."/>
            <person name="Weinstock G.M."/>
            <person name="Rosenthal A."/>
            <person name="Cox E.C."/>
            <person name="Chisholm R.L."/>
            <person name="Gibbs R.A."/>
            <person name="Loomis W.F."/>
            <person name="Platzer M."/>
            <person name="Kay R.R."/>
            <person name="Williams J.G."/>
            <person name="Dear P.H."/>
            <person name="Noegel A.A."/>
            <person name="Barrell B.G."/>
            <person name="Kuspa A."/>
        </authorList>
    </citation>
    <scope>NUCLEOTIDE SEQUENCE [LARGE SCALE GENOMIC DNA]</scope>
    <source>
        <strain>AX4</strain>
    </source>
</reference>
<dbReference type="EMBL" id="AAFI02000004">
    <property type="protein sequence ID" value="EAL72942.1"/>
    <property type="molecule type" value="Genomic_DNA"/>
</dbReference>
<dbReference type="RefSeq" id="XP_646876.1">
    <property type="nucleotide sequence ID" value="XM_641784.1"/>
</dbReference>
<dbReference type="SMR" id="Q55EZ4"/>
<dbReference type="FunCoup" id="Q55EZ4">
    <property type="interactions" value="199"/>
</dbReference>
<dbReference type="STRING" id="44689.Q55EZ4"/>
<dbReference type="GlyGen" id="Q55EZ4">
    <property type="glycosylation" value="1 site"/>
</dbReference>
<dbReference type="PaxDb" id="44689-DDB0234074"/>
<dbReference type="EnsemblProtists" id="EAL72942">
    <property type="protein sequence ID" value="EAL72942"/>
    <property type="gene ID" value="DDB_G0268706"/>
</dbReference>
<dbReference type="GeneID" id="8616559"/>
<dbReference type="KEGG" id="ddi:DDB_G0268706"/>
<dbReference type="dictyBase" id="DDB_G0268706">
    <property type="gene designation" value="ints3"/>
</dbReference>
<dbReference type="VEuPathDB" id="AmoebaDB:DDB_G0268706"/>
<dbReference type="eggNOG" id="KOG4262">
    <property type="taxonomic scope" value="Eukaryota"/>
</dbReference>
<dbReference type="HOGENOM" id="CLU_247789_0_0_1"/>
<dbReference type="InParanoid" id="Q55EZ4"/>
<dbReference type="OMA" id="FQECLVI"/>
<dbReference type="Reactome" id="R-DDI-6807505">
    <property type="pathway name" value="RNA polymerase II transcribes snRNA genes"/>
</dbReference>
<dbReference type="PRO" id="PR:Q55EZ4"/>
<dbReference type="Proteomes" id="UP000002195">
    <property type="component" value="Chromosome 1"/>
</dbReference>
<dbReference type="GO" id="GO:0005737">
    <property type="term" value="C:cytoplasm"/>
    <property type="evidence" value="ECO:0000318"/>
    <property type="project" value="GO_Central"/>
</dbReference>
<dbReference type="GO" id="GO:0160232">
    <property type="term" value="C:INTAC complex"/>
    <property type="evidence" value="ECO:0000250"/>
    <property type="project" value="UniProtKB"/>
</dbReference>
<dbReference type="GO" id="GO:0032039">
    <property type="term" value="C:integrator complex"/>
    <property type="evidence" value="ECO:0000250"/>
    <property type="project" value="UniProtKB"/>
</dbReference>
<dbReference type="GO" id="GO:0005634">
    <property type="term" value="C:nucleus"/>
    <property type="evidence" value="ECO:0000250"/>
    <property type="project" value="UniProtKB"/>
</dbReference>
<dbReference type="GO" id="GO:0160240">
    <property type="term" value="P:RNA polymerase II transcription initiation surveillance"/>
    <property type="evidence" value="ECO:0000250"/>
    <property type="project" value="UniProtKB"/>
</dbReference>
<dbReference type="InterPro" id="IPR056518">
    <property type="entry name" value="HEAT_Ints3_C"/>
</dbReference>
<dbReference type="InterPro" id="IPR045334">
    <property type="entry name" value="INTS3"/>
</dbReference>
<dbReference type="InterPro" id="IPR019333">
    <property type="entry name" value="INTS3_N"/>
</dbReference>
<dbReference type="PANTHER" id="PTHR13587">
    <property type="entry name" value="INTEGRATOR COMPLEX SUBUNIT 3"/>
    <property type="match status" value="1"/>
</dbReference>
<dbReference type="PANTHER" id="PTHR13587:SF7">
    <property type="entry name" value="INTEGRATOR COMPLEX SUBUNIT 3"/>
    <property type="match status" value="1"/>
</dbReference>
<dbReference type="Pfam" id="PF24566">
    <property type="entry name" value="HEAT_Ints3_C"/>
    <property type="match status" value="1"/>
</dbReference>
<dbReference type="Pfam" id="PF10189">
    <property type="entry name" value="Ints3_N"/>
    <property type="match status" value="1"/>
</dbReference>
<sequence>MMNQQQQQQQPPTTSPTQQQQLTQLQTHQYFQNKFKLFYKRELDEADPLEIYWRECYDKIELLLLNSSEAEINNYLIEKSASVESSGNNDQSNKFHTEVTIGFLYAILLGSPQNIALSHQYFKSLTFFTKDSLALFCSLLKKLIADKFQKLNDTPRQQVVWIINELIATNHQDCESVTSIILRHIYGGNFTSKNLSLSHSMLNMFLTHRQWLNSRPLLIPTILYNFLRLIQDHISRPQGLHNPTHLKDEINFCLDLLKNKFQECLVIGRDLIRLLQYLSTKTIEFEQLWKDLNSKPTTFAPGYYDIIQSMKTPTPKHFLQSRLSPEMELQVLYILKEVKFGNQKRYQQWFVTKYLVTPESESLIPDIIRYICCVYHPPNHVLCSDIVPRWAIIGWLLKHCKSDAWRNYSKLSLFLDWLYFEPKIDSIMNIEPAILLMAGSVKKYADMTIDLVEFIVGTLLDSYDIQRKDAIRQGIHNSFATVLEKGVVQSLSHVFPPDSLGPSLFEKVKHYFHQFLTNSPIHQLHSQQQQLQQQQLQQPQQPQQQQQPPQYKPYPQQPINKQLPLQMSPQQQSQQQLQQQQLQQQLQQQQQQQQPPQQPPPQQQPQQQPPQQQPQQQPQQQQPQLNISTGNLPNIQQPMVKSPPLSSNTLVSPTSSSSPTSSNLPTNNSRVLNKSGVDIHHVSNLSPQVISQKPQSQQTPSLHSSSQSVLQQKSPPLKETSLFEQQQPSQQLPSQIVKNSPPNLSMTNENISNPPPPPHAKISSDHASPLINSSNSNITTPNPDSQSQIPIPPPISQSPSTKNIDVIMSELNDEPPKLSKSSPTQSNIIVPPPTHKPPQTTISSSSPLLQPQTQPQPQTQPQPQTLQQSTTPSLSSSSTPTIPISPPLLPTQLEIDIQPPPPPPSSQPLQPPPPPPPSQNIKDETLNSLIELNSSIKLDEEIKMEIPDILLTIGSKPQFQPTNITITLGSILSNFNEKISKQPNITLQNELTDSLTQYLSQVLKPELQIDLSTTPSLLSLFCNFQVIHHIFRATFSPTDNSITTTTTTTAAATTTTTTTPTIVKPMFNILKELYKIYPSIGFKIMIWSIITSPGGLNITNNGCTYIYPDIECDNSFSNSDDNESTNNNNNGVEQKPQQQQQQQQQQQINENTHNNNNNNNNNNNNNNNNNNENNITNNSQNITIKEESIFKIEKLLESVQDSNGNRNILGNYLNFHSNLLGGQPPPPPPPQQPNKIVEQIISDCIEANNVGAFNYLVPILYKSFSNLLVGNSDFLYLVLSCINPRQHFRICNKISMGEFRVFGNEMKSLISQSFKWESFEQNYLWQMLIAEDSVYSGMIVKEYPFIISKLDPYNNSEVLQNLTITLKETKFYDFNIFSETLLLNDYFYTFVFCLFSFWLKNNTTQTFNYINQIFDFYLSNNNNNNNNNRKLVERILYFYNIFLKKYGEERIKWSDMIDSDRVSKVLQRSTNSNLFQKYSNLGSLVLPSQSSNIKNDNNPTLSKHQNSDDDSNPKKRFRKE</sequence>
<protein>
    <recommendedName>
        <fullName>Integrator complex subunit 3 homolog</fullName>
    </recommendedName>
    <alternativeName>
        <fullName>SOSS complex subunit A homolog</fullName>
    </alternativeName>
</protein>